<keyword id="KW-0963">Cytoplasm</keyword>
<keyword id="KW-0206">Cytoskeleton</keyword>
<keyword id="KW-0539">Nucleus</keyword>
<keyword id="KW-1185">Reference proteome</keyword>
<keyword id="KW-0694">RNA-binding</keyword>
<keyword id="KW-0804">Transcription</keyword>
<keyword id="KW-0805">Transcription regulation</keyword>
<dbReference type="EMBL" id="BC082840">
    <property type="protein sequence ID" value="AAH82840.1"/>
    <property type="molecule type" value="mRNA"/>
</dbReference>
<dbReference type="RefSeq" id="NP_001088113.1">
    <property type="nucleotide sequence ID" value="NM_001094644.1"/>
</dbReference>
<dbReference type="SMR" id="Q63ZS0"/>
<dbReference type="BioGRID" id="104895">
    <property type="interactions" value="2"/>
</dbReference>
<dbReference type="IntAct" id="Q63ZS0">
    <property type="interactions" value="1"/>
</dbReference>
<dbReference type="DNASU" id="494815"/>
<dbReference type="GeneID" id="494815"/>
<dbReference type="KEGG" id="xla:494815"/>
<dbReference type="AGR" id="Xenbase:XB-GENE-17334024"/>
<dbReference type="CTD" id="494815"/>
<dbReference type="Xenbase" id="XB-GENE-17334024">
    <property type="gene designation" value="rtraf.L"/>
</dbReference>
<dbReference type="OMA" id="YPMRILR"/>
<dbReference type="OrthoDB" id="514167at2759"/>
<dbReference type="Proteomes" id="UP000186698">
    <property type="component" value="Chromosome 8L"/>
</dbReference>
<dbReference type="Bgee" id="494815">
    <property type="expression patterns" value="Expressed in muscle tissue and 19 other cell types or tissues"/>
</dbReference>
<dbReference type="GO" id="GO:0005813">
    <property type="term" value="C:centrosome"/>
    <property type="evidence" value="ECO:0000250"/>
    <property type="project" value="UniProtKB"/>
</dbReference>
<dbReference type="GO" id="GO:0005737">
    <property type="term" value="C:cytoplasm"/>
    <property type="evidence" value="ECO:0000250"/>
    <property type="project" value="UniProtKB"/>
</dbReference>
<dbReference type="GO" id="GO:0005829">
    <property type="term" value="C:cytosol"/>
    <property type="evidence" value="ECO:0007669"/>
    <property type="project" value="UniProtKB-SubCell"/>
</dbReference>
<dbReference type="GO" id="GO:0072686">
    <property type="term" value="C:mitotic spindle"/>
    <property type="evidence" value="ECO:0000250"/>
    <property type="project" value="UniProtKB"/>
</dbReference>
<dbReference type="GO" id="GO:0005634">
    <property type="term" value="C:nucleus"/>
    <property type="evidence" value="ECO:0000250"/>
    <property type="project" value="UniProtKB"/>
</dbReference>
<dbReference type="GO" id="GO:0048471">
    <property type="term" value="C:perinuclear region of cytoplasm"/>
    <property type="evidence" value="ECO:0000250"/>
    <property type="project" value="UniProtKB"/>
</dbReference>
<dbReference type="GO" id="GO:0072669">
    <property type="term" value="C:tRNA-splicing ligase complex"/>
    <property type="evidence" value="ECO:0000250"/>
    <property type="project" value="UniProtKB"/>
</dbReference>
<dbReference type="GO" id="GO:0003723">
    <property type="term" value="F:RNA binding"/>
    <property type="evidence" value="ECO:0000250"/>
    <property type="project" value="UniProtKB"/>
</dbReference>
<dbReference type="GO" id="GO:0000993">
    <property type="term" value="F:RNA polymerase II complex binding"/>
    <property type="evidence" value="ECO:0000250"/>
    <property type="project" value="UniProtKB"/>
</dbReference>
<dbReference type="GO" id="GO:0006469">
    <property type="term" value="P:negative regulation of protein kinase activity"/>
    <property type="evidence" value="ECO:0000250"/>
    <property type="project" value="UniProtKB"/>
</dbReference>
<dbReference type="GO" id="GO:0045944">
    <property type="term" value="P:positive regulation of transcription by RNA polymerase II"/>
    <property type="evidence" value="ECO:0000250"/>
    <property type="project" value="UniProtKB"/>
</dbReference>
<dbReference type="GO" id="GO:0006388">
    <property type="term" value="P:tRNA splicing, via endonucleolytic cleavage and ligation"/>
    <property type="evidence" value="ECO:0000250"/>
    <property type="project" value="UniProtKB"/>
</dbReference>
<dbReference type="InterPro" id="IPR019265">
    <property type="entry name" value="RTRAF"/>
</dbReference>
<dbReference type="PANTHER" id="PTHR15924">
    <property type="entry name" value="CLE"/>
    <property type="match status" value="1"/>
</dbReference>
<dbReference type="Pfam" id="PF10036">
    <property type="entry name" value="RLL"/>
    <property type="match status" value="1"/>
</dbReference>
<accession>Q63ZS0</accession>
<comment type="function">
    <text evidence="1">RNA-binding protein involved in modulation of mRNA transcription by Polymerase II. Component of the tRNA-splicing ligase complex.</text>
</comment>
<comment type="subunit">
    <text evidence="1">Homodimer. Component of a tRNA-splicing ligase complex.</text>
</comment>
<comment type="subcellular location">
    <subcellularLocation>
        <location evidence="1">Nucleus</location>
    </subcellularLocation>
    <subcellularLocation>
        <location evidence="1">Cytoplasm</location>
        <location evidence="1">Cytosol</location>
    </subcellularLocation>
    <subcellularLocation>
        <location evidence="1">Cytoplasm</location>
        <location evidence="1">Perinuclear region</location>
    </subcellularLocation>
    <subcellularLocation>
        <location evidence="1">Cytoplasm</location>
        <location evidence="1">Cytoskeleton</location>
        <location evidence="1">Microtubule organizing center</location>
        <location evidence="1">Centrosome</location>
    </subcellularLocation>
    <text evidence="1">Shuttles between the cytosol and the nucleus.</text>
</comment>
<comment type="similarity">
    <text evidence="2">Belongs to the RTRAF family.</text>
</comment>
<protein>
    <recommendedName>
        <fullName evidence="1">RNA transcription, translation and transport factor protein</fullName>
    </recommendedName>
</protein>
<evidence type="ECO:0000250" key="1">
    <source>
        <dbReference type="UniProtKB" id="Q9Y224"/>
    </source>
</evidence>
<evidence type="ECO:0000305" key="2"/>
<feature type="chain" id="PRO_0000331289" description="RNA transcription, translation and transport factor protein">
    <location>
        <begin position="1"/>
        <end position="240"/>
    </location>
</feature>
<sequence>MFRRKLQALDYHNPAGFNFKDETEFRNFLVWLEDQKIRHYKIEERGNLRNIHSSEWPAQYEKYLNDVNCPFKVQERQESIDWLLGLAVRLEYGDNAAKYQNAKPYNSDVSKSAEPLINLDVNNPDFKAGVMALANLLQIQRHDDYLMMLKAIRILVQERLSQEAVAKSNSAKEGLPVALDKHILGFDTGDAVLNDAARILRLLHIEELRELQTKINEAIVAVQAIIADPKTDHRLGKVGR</sequence>
<reference key="1">
    <citation type="submission" date="2004-09" db="EMBL/GenBank/DDBJ databases">
        <authorList>
            <consortium name="NIH - Xenopus Gene Collection (XGC) project"/>
        </authorList>
    </citation>
    <scope>NUCLEOTIDE SEQUENCE [LARGE SCALE MRNA]</scope>
    <source>
        <tissue>Embryo</tissue>
    </source>
</reference>
<proteinExistence type="evidence at transcript level"/>
<organism>
    <name type="scientific">Xenopus laevis</name>
    <name type="common">African clawed frog</name>
    <dbReference type="NCBI Taxonomy" id="8355"/>
    <lineage>
        <taxon>Eukaryota</taxon>
        <taxon>Metazoa</taxon>
        <taxon>Chordata</taxon>
        <taxon>Craniata</taxon>
        <taxon>Vertebrata</taxon>
        <taxon>Euteleostomi</taxon>
        <taxon>Amphibia</taxon>
        <taxon>Batrachia</taxon>
        <taxon>Anura</taxon>
        <taxon>Pipoidea</taxon>
        <taxon>Pipidae</taxon>
        <taxon>Xenopodinae</taxon>
        <taxon>Xenopus</taxon>
        <taxon>Xenopus</taxon>
    </lineage>
</organism>
<name>RTRAF_XENLA</name>
<gene>
    <name evidence="1" type="primary">rtraf</name>
</gene>